<evidence type="ECO:0000255" key="1">
    <source>
        <dbReference type="HAMAP-Rule" id="MF_00017"/>
    </source>
</evidence>
<comment type="function">
    <text evidence="1">May play a role in DNA repair. It seems to be involved in an RecBC-independent recombinational process of DNA repair. It may act with RecF and RecO.</text>
</comment>
<comment type="similarity">
    <text evidence="1">Belongs to the RecR family.</text>
</comment>
<dbReference type="EMBL" id="AM295250">
    <property type="protein sequence ID" value="CAL27034.1"/>
    <property type="molecule type" value="Genomic_DNA"/>
</dbReference>
<dbReference type="RefSeq" id="WP_012664149.1">
    <property type="nucleotide sequence ID" value="NC_012121.1"/>
</dbReference>
<dbReference type="SMR" id="B9DLF7"/>
<dbReference type="GeneID" id="93795033"/>
<dbReference type="KEGG" id="sca:SCA_0121"/>
<dbReference type="eggNOG" id="COG0353">
    <property type="taxonomic scope" value="Bacteria"/>
</dbReference>
<dbReference type="HOGENOM" id="CLU_060739_1_0_9"/>
<dbReference type="OrthoDB" id="9802672at2"/>
<dbReference type="BioCyc" id="SCAR396513:SCA_RS00575-MONOMER"/>
<dbReference type="Proteomes" id="UP000000444">
    <property type="component" value="Chromosome"/>
</dbReference>
<dbReference type="GO" id="GO:0003677">
    <property type="term" value="F:DNA binding"/>
    <property type="evidence" value="ECO:0007669"/>
    <property type="project" value="UniProtKB-UniRule"/>
</dbReference>
<dbReference type="GO" id="GO:0008270">
    <property type="term" value="F:zinc ion binding"/>
    <property type="evidence" value="ECO:0007669"/>
    <property type="project" value="UniProtKB-KW"/>
</dbReference>
<dbReference type="GO" id="GO:0006310">
    <property type="term" value="P:DNA recombination"/>
    <property type="evidence" value="ECO:0007669"/>
    <property type="project" value="UniProtKB-UniRule"/>
</dbReference>
<dbReference type="GO" id="GO:0006281">
    <property type="term" value="P:DNA repair"/>
    <property type="evidence" value="ECO:0007669"/>
    <property type="project" value="UniProtKB-UniRule"/>
</dbReference>
<dbReference type="CDD" id="cd01025">
    <property type="entry name" value="TOPRIM_recR"/>
    <property type="match status" value="1"/>
</dbReference>
<dbReference type="Gene3D" id="3.30.60.80">
    <property type="match status" value="1"/>
</dbReference>
<dbReference type="Gene3D" id="3.40.1360.10">
    <property type="match status" value="1"/>
</dbReference>
<dbReference type="Gene3D" id="6.10.250.240">
    <property type="match status" value="1"/>
</dbReference>
<dbReference type="Gene3D" id="1.10.8.420">
    <property type="entry name" value="RecR Domain 1"/>
    <property type="match status" value="1"/>
</dbReference>
<dbReference type="HAMAP" id="MF_00017">
    <property type="entry name" value="RecR"/>
    <property type="match status" value="1"/>
</dbReference>
<dbReference type="InterPro" id="IPR000093">
    <property type="entry name" value="DNA_Rcmb_RecR"/>
</dbReference>
<dbReference type="InterPro" id="IPR003583">
    <property type="entry name" value="Hlx-hairpin-Hlx_DNA-bd_motif"/>
</dbReference>
<dbReference type="InterPro" id="IPR023627">
    <property type="entry name" value="Rcmb_RecR"/>
</dbReference>
<dbReference type="InterPro" id="IPR015967">
    <property type="entry name" value="Rcmb_RecR_Znf"/>
</dbReference>
<dbReference type="InterPro" id="IPR006171">
    <property type="entry name" value="TOPRIM_dom"/>
</dbReference>
<dbReference type="InterPro" id="IPR034137">
    <property type="entry name" value="TOPRIM_RecR"/>
</dbReference>
<dbReference type="NCBIfam" id="TIGR00615">
    <property type="entry name" value="recR"/>
    <property type="match status" value="1"/>
</dbReference>
<dbReference type="PANTHER" id="PTHR30446">
    <property type="entry name" value="RECOMBINATION PROTEIN RECR"/>
    <property type="match status" value="1"/>
</dbReference>
<dbReference type="PANTHER" id="PTHR30446:SF0">
    <property type="entry name" value="RECOMBINATION PROTEIN RECR"/>
    <property type="match status" value="1"/>
</dbReference>
<dbReference type="Pfam" id="PF21175">
    <property type="entry name" value="RecR_C"/>
    <property type="match status" value="1"/>
</dbReference>
<dbReference type="Pfam" id="PF21176">
    <property type="entry name" value="RecR_HhH"/>
    <property type="match status" value="1"/>
</dbReference>
<dbReference type="Pfam" id="PF02132">
    <property type="entry name" value="RecR_ZnF"/>
    <property type="match status" value="1"/>
</dbReference>
<dbReference type="Pfam" id="PF13662">
    <property type="entry name" value="Toprim_4"/>
    <property type="match status" value="1"/>
</dbReference>
<dbReference type="SMART" id="SM00278">
    <property type="entry name" value="HhH1"/>
    <property type="match status" value="1"/>
</dbReference>
<dbReference type="SMART" id="SM00493">
    <property type="entry name" value="TOPRIM"/>
    <property type="match status" value="1"/>
</dbReference>
<dbReference type="SUPFAM" id="SSF111304">
    <property type="entry name" value="Recombination protein RecR"/>
    <property type="match status" value="1"/>
</dbReference>
<dbReference type="PROSITE" id="PS01300">
    <property type="entry name" value="RECR"/>
    <property type="match status" value="1"/>
</dbReference>
<dbReference type="PROSITE" id="PS50880">
    <property type="entry name" value="TOPRIM"/>
    <property type="match status" value="1"/>
</dbReference>
<accession>B9DLF7</accession>
<proteinExistence type="inferred from homology"/>
<name>RECR_STACT</name>
<organism>
    <name type="scientific">Staphylococcus carnosus (strain TM300)</name>
    <dbReference type="NCBI Taxonomy" id="396513"/>
    <lineage>
        <taxon>Bacteria</taxon>
        <taxon>Bacillati</taxon>
        <taxon>Bacillota</taxon>
        <taxon>Bacilli</taxon>
        <taxon>Bacillales</taxon>
        <taxon>Staphylococcaceae</taxon>
        <taxon>Staphylococcus</taxon>
    </lineage>
</organism>
<feature type="chain" id="PRO_1000195409" description="Recombination protein RecR">
    <location>
        <begin position="1"/>
        <end position="198"/>
    </location>
</feature>
<feature type="domain" description="Toprim" evidence="1">
    <location>
        <begin position="80"/>
        <end position="175"/>
    </location>
</feature>
<feature type="zinc finger region" description="C4-type" evidence="1">
    <location>
        <begin position="57"/>
        <end position="72"/>
    </location>
</feature>
<gene>
    <name evidence="1" type="primary">recR</name>
    <name type="ordered locus">Sca_0121</name>
</gene>
<protein>
    <recommendedName>
        <fullName evidence="1">Recombination protein RecR</fullName>
    </recommendedName>
</protein>
<keyword id="KW-0227">DNA damage</keyword>
<keyword id="KW-0233">DNA recombination</keyword>
<keyword id="KW-0234">DNA repair</keyword>
<keyword id="KW-0479">Metal-binding</keyword>
<keyword id="KW-1185">Reference proteome</keyword>
<keyword id="KW-0862">Zinc</keyword>
<keyword id="KW-0863">Zinc-finger</keyword>
<reference key="1">
    <citation type="journal article" date="2009" name="Appl. Environ. Microbiol.">
        <title>Genome analysis of the meat starter culture bacterium Staphylococcus carnosus TM300.</title>
        <authorList>
            <person name="Rosenstein R."/>
            <person name="Nerz C."/>
            <person name="Biswas L."/>
            <person name="Resch A."/>
            <person name="Raddatz G."/>
            <person name="Schuster S.C."/>
            <person name="Goetz F."/>
        </authorList>
    </citation>
    <scope>NUCLEOTIDE SEQUENCE [LARGE SCALE GENOMIC DNA]</scope>
    <source>
        <strain>TM300</strain>
    </source>
</reference>
<sequence>MHYPEPISKLIDSFMKLPGIGPKTAQRLAFHVLDMKEDDVVQFAKALVDVKRELTYCSVCGHITEEDPCYICNDKQRDRSVICVVEDDKDVIAMEKMREYKGLYHVLHGAISPMDGIGPEDINIPSLIERLKDEEVKELILAMNPNLEGESTAMYISRLVKPIGIKVTRLAQGLSVGGDLEYADEVTLSRAIEGRTEM</sequence>